<evidence type="ECO:0000255" key="1">
    <source>
        <dbReference type="HAMAP-Rule" id="MF_00054"/>
    </source>
</evidence>
<keyword id="KW-0963">Cytoplasm</keyword>
<keyword id="KW-0251">Elongation factor</keyword>
<keyword id="KW-0342">GTP-binding</keyword>
<keyword id="KW-0547">Nucleotide-binding</keyword>
<keyword id="KW-0648">Protein biosynthesis</keyword>
<accession>Q824G0</accession>
<reference key="1">
    <citation type="journal article" date="2003" name="Nucleic Acids Res.">
        <title>Genome sequence of Chlamydophila caviae (Chlamydia psittaci GPIC): examining the role of niche-specific genes in the evolution of the Chlamydiaceae.</title>
        <authorList>
            <person name="Read T.D."/>
            <person name="Myers G.S.A."/>
            <person name="Brunham R.C."/>
            <person name="Nelson W.C."/>
            <person name="Paulsen I.T."/>
            <person name="Heidelberg J.F."/>
            <person name="Holtzapple E.K."/>
            <person name="Khouri H.M."/>
            <person name="Federova N.B."/>
            <person name="Carty H.A."/>
            <person name="Umayam L.A."/>
            <person name="Haft D.H."/>
            <person name="Peterson J.D."/>
            <person name="Beanan M.J."/>
            <person name="White O."/>
            <person name="Salzberg S.L."/>
            <person name="Hsia R.-C."/>
            <person name="McClarty G."/>
            <person name="Rank R.G."/>
            <person name="Bavoil P.M."/>
            <person name="Fraser C.M."/>
        </authorList>
    </citation>
    <scope>NUCLEOTIDE SEQUENCE [LARGE SCALE GENOMIC DNA]</scope>
    <source>
        <strain>ATCC VR-813 / DSM 19441 / 03DC25 / GPIC</strain>
    </source>
</reference>
<protein>
    <recommendedName>
        <fullName evidence="1">Elongation factor G</fullName>
        <shortName evidence="1">EF-G</shortName>
    </recommendedName>
</protein>
<dbReference type="EMBL" id="AE015925">
    <property type="protein sequence ID" value="AAP04943.1"/>
    <property type="molecule type" value="Genomic_DNA"/>
</dbReference>
<dbReference type="RefSeq" id="WP_011006163.1">
    <property type="nucleotide sequence ID" value="NC_003361.3"/>
</dbReference>
<dbReference type="SMR" id="Q824G0"/>
<dbReference type="STRING" id="227941.CCA_00192"/>
<dbReference type="KEGG" id="cca:CCA_00192"/>
<dbReference type="eggNOG" id="COG0480">
    <property type="taxonomic scope" value="Bacteria"/>
</dbReference>
<dbReference type="HOGENOM" id="CLU_002794_4_1_0"/>
<dbReference type="OrthoDB" id="9801591at2"/>
<dbReference type="Proteomes" id="UP000002193">
    <property type="component" value="Chromosome"/>
</dbReference>
<dbReference type="GO" id="GO:0005737">
    <property type="term" value="C:cytoplasm"/>
    <property type="evidence" value="ECO:0007669"/>
    <property type="project" value="UniProtKB-SubCell"/>
</dbReference>
<dbReference type="GO" id="GO:0005525">
    <property type="term" value="F:GTP binding"/>
    <property type="evidence" value="ECO:0007669"/>
    <property type="project" value="UniProtKB-UniRule"/>
</dbReference>
<dbReference type="GO" id="GO:0003924">
    <property type="term" value="F:GTPase activity"/>
    <property type="evidence" value="ECO:0007669"/>
    <property type="project" value="InterPro"/>
</dbReference>
<dbReference type="GO" id="GO:0003746">
    <property type="term" value="F:translation elongation factor activity"/>
    <property type="evidence" value="ECO:0007669"/>
    <property type="project" value="UniProtKB-UniRule"/>
</dbReference>
<dbReference type="GO" id="GO:0032790">
    <property type="term" value="P:ribosome disassembly"/>
    <property type="evidence" value="ECO:0007669"/>
    <property type="project" value="TreeGrafter"/>
</dbReference>
<dbReference type="CDD" id="cd01886">
    <property type="entry name" value="EF-G"/>
    <property type="match status" value="1"/>
</dbReference>
<dbReference type="CDD" id="cd16262">
    <property type="entry name" value="EFG_III"/>
    <property type="match status" value="1"/>
</dbReference>
<dbReference type="CDD" id="cd01434">
    <property type="entry name" value="EFG_mtEFG1_IV"/>
    <property type="match status" value="1"/>
</dbReference>
<dbReference type="CDD" id="cd03713">
    <property type="entry name" value="EFG_mtEFG_C"/>
    <property type="match status" value="1"/>
</dbReference>
<dbReference type="CDD" id="cd04088">
    <property type="entry name" value="EFG_mtEFG_II"/>
    <property type="match status" value="1"/>
</dbReference>
<dbReference type="FunFam" id="2.40.30.10:FF:000006">
    <property type="entry name" value="Elongation factor G"/>
    <property type="match status" value="1"/>
</dbReference>
<dbReference type="FunFam" id="3.30.230.10:FF:000003">
    <property type="entry name" value="Elongation factor G"/>
    <property type="match status" value="1"/>
</dbReference>
<dbReference type="FunFam" id="3.30.70.240:FF:000001">
    <property type="entry name" value="Elongation factor G"/>
    <property type="match status" value="1"/>
</dbReference>
<dbReference type="FunFam" id="3.30.70.870:FF:000001">
    <property type="entry name" value="Elongation factor G"/>
    <property type="match status" value="1"/>
</dbReference>
<dbReference type="FunFam" id="3.40.50.300:FF:000029">
    <property type="entry name" value="Elongation factor G"/>
    <property type="match status" value="1"/>
</dbReference>
<dbReference type="Gene3D" id="3.30.230.10">
    <property type="match status" value="1"/>
</dbReference>
<dbReference type="Gene3D" id="3.30.70.240">
    <property type="match status" value="1"/>
</dbReference>
<dbReference type="Gene3D" id="3.30.70.870">
    <property type="entry name" value="Elongation Factor G (Translational Gtpase), domain 3"/>
    <property type="match status" value="1"/>
</dbReference>
<dbReference type="Gene3D" id="3.40.50.300">
    <property type="entry name" value="P-loop containing nucleotide triphosphate hydrolases"/>
    <property type="match status" value="1"/>
</dbReference>
<dbReference type="Gene3D" id="2.40.30.10">
    <property type="entry name" value="Translation factors"/>
    <property type="match status" value="1"/>
</dbReference>
<dbReference type="HAMAP" id="MF_00054_B">
    <property type="entry name" value="EF_G_EF_2_B"/>
    <property type="match status" value="1"/>
</dbReference>
<dbReference type="InterPro" id="IPR041095">
    <property type="entry name" value="EFG_II"/>
</dbReference>
<dbReference type="InterPro" id="IPR009022">
    <property type="entry name" value="EFG_III"/>
</dbReference>
<dbReference type="InterPro" id="IPR035647">
    <property type="entry name" value="EFG_III/V"/>
</dbReference>
<dbReference type="InterPro" id="IPR047872">
    <property type="entry name" value="EFG_IV"/>
</dbReference>
<dbReference type="InterPro" id="IPR035649">
    <property type="entry name" value="EFG_V"/>
</dbReference>
<dbReference type="InterPro" id="IPR000640">
    <property type="entry name" value="EFG_V-like"/>
</dbReference>
<dbReference type="InterPro" id="IPR004161">
    <property type="entry name" value="EFTu-like_2"/>
</dbReference>
<dbReference type="InterPro" id="IPR031157">
    <property type="entry name" value="G_TR_CS"/>
</dbReference>
<dbReference type="InterPro" id="IPR027417">
    <property type="entry name" value="P-loop_NTPase"/>
</dbReference>
<dbReference type="InterPro" id="IPR020568">
    <property type="entry name" value="Ribosomal_Su5_D2-typ_SF"/>
</dbReference>
<dbReference type="InterPro" id="IPR014721">
    <property type="entry name" value="Ribsml_uS5_D2-typ_fold_subgr"/>
</dbReference>
<dbReference type="InterPro" id="IPR005225">
    <property type="entry name" value="Small_GTP-bd"/>
</dbReference>
<dbReference type="InterPro" id="IPR000795">
    <property type="entry name" value="T_Tr_GTP-bd_dom"/>
</dbReference>
<dbReference type="InterPro" id="IPR009000">
    <property type="entry name" value="Transl_B-barrel_sf"/>
</dbReference>
<dbReference type="InterPro" id="IPR004540">
    <property type="entry name" value="Transl_elong_EFG/EF2"/>
</dbReference>
<dbReference type="InterPro" id="IPR005517">
    <property type="entry name" value="Transl_elong_EFG/EF2_IV"/>
</dbReference>
<dbReference type="NCBIfam" id="TIGR00484">
    <property type="entry name" value="EF-G"/>
    <property type="match status" value="1"/>
</dbReference>
<dbReference type="NCBIfam" id="NF009381">
    <property type="entry name" value="PRK12740.1-5"/>
    <property type="match status" value="1"/>
</dbReference>
<dbReference type="NCBIfam" id="TIGR00231">
    <property type="entry name" value="small_GTP"/>
    <property type="match status" value="1"/>
</dbReference>
<dbReference type="PANTHER" id="PTHR43261:SF1">
    <property type="entry name" value="RIBOSOME-RELEASING FACTOR 2, MITOCHONDRIAL"/>
    <property type="match status" value="1"/>
</dbReference>
<dbReference type="PANTHER" id="PTHR43261">
    <property type="entry name" value="TRANSLATION ELONGATION FACTOR G-RELATED"/>
    <property type="match status" value="1"/>
</dbReference>
<dbReference type="Pfam" id="PF00679">
    <property type="entry name" value="EFG_C"/>
    <property type="match status" value="1"/>
</dbReference>
<dbReference type="Pfam" id="PF14492">
    <property type="entry name" value="EFG_III"/>
    <property type="match status" value="1"/>
</dbReference>
<dbReference type="Pfam" id="PF03764">
    <property type="entry name" value="EFG_IV"/>
    <property type="match status" value="1"/>
</dbReference>
<dbReference type="Pfam" id="PF00009">
    <property type="entry name" value="GTP_EFTU"/>
    <property type="match status" value="1"/>
</dbReference>
<dbReference type="Pfam" id="PF03144">
    <property type="entry name" value="GTP_EFTU_D2"/>
    <property type="match status" value="1"/>
</dbReference>
<dbReference type="PRINTS" id="PR00315">
    <property type="entry name" value="ELONGATNFCT"/>
</dbReference>
<dbReference type="SMART" id="SM00838">
    <property type="entry name" value="EFG_C"/>
    <property type="match status" value="1"/>
</dbReference>
<dbReference type="SMART" id="SM00889">
    <property type="entry name" value="EFG_IV"/>
    <property type="match status" value="1"/>
</dbReference>
<dbReference type="SUPFAM" id="SSF54980">
    <property type="entry name" value="EF-G C-terminal domain-like"/>
    <property type="match status" value="2"/>
</dbReference>
<dbReference type="SUPFAM" id="SSF52540">
    <property type="entry name" value="P-loop containing nucleoside triphosphate hydrolases"/>
    <property type="match status" value="1"/>
</dbReference>
<dbReference type="SUPFAM" id="SSF54211">
    <property type="entry name" value="Ribosomal protein S5 domain 2-like"/>
    <property type="match status" value="1"/>
</dbReference>
<dbReference type="SUPFAM" id="SSF50447">
    <property type="entry name" value="Translation proteins"/>
    <property type="match status" value="1"/>
</dbReference>
<dbReference type="PROSITE" id="PS00301">
    <property type="entry name" value="G_TR_1"/>
    <property type="match status" value="1"/>
</dbReference>
<dbReference type="PROSITE" id="PS51722">
    <property type="entry name" value="G_TR_2"/>
    <property type="match status" value="1"/>
</dbReference>
<proteinExistence type="inferred from homology"/>
<feature type="chain" id="PRO_0000091101" description="Elongation factor G">
    <location>
        <begin position="1"/>
        <end position="694"/>
    </location>
</feature>
<feature type="domain" description="tr-type G">
    <location>
        <begin position="9"/>
        <end position="288"/>
    </location>
</feature>
<feature type="binding site" evidence="1">
    <location>
        <begin position="18"/>
        <end position="25"/>
    </location>
    <ligand>
        <name>GTP</name>
        <dbReference type="ChEBI" id="CHEBI:37565"/>
    </ligand>
</feature>
<feature type="binding site" evidence="1">
    <location>
        <begin position="82"/>
        <end position="86"/>
    </location>
    <ligand>
        <name>GTP</name>
        <dbReference type="ChEBI" id="CHEBI:37565"/>
    </ligand>
</feature>
<feature type="binding site" evidence="1">
    <location>
        <begin position="136"/>
        <end position="139"/>
    </location>
    <ligand>
        <name>GTP</name>
        <dbReference type="ChEBI" id="CHEBI:37565"/>
    </ligand>
</feature>
<comment type="function">
    <text evidence="1">Catalyzes the GTP-dependent ribosomal translocation step during translation elongation. During this step, the ribosome changes from the pre-translocational (PRE) to the post-translocational (POST) state as the newly formed A-site-bound peptidyl-tRNA and P-site-bound deacylated tRNA move to the P and E sites, respectively. Catalyzes the coordinated movement of the two tRNA molecules, the mRNA and conformational changes in the ribosome.</text>
</comment>
<comment type="subcellular location">
    <subcellularLocation>
        <location evidence="1">Cytoplasm</location>
    </subcellularLocation>
</comment>
<comment type="similarity">
    <text evidence="1">Belongs to the TRAFAC class translation factor GTPase superfamily. Classic translation factor GTPase family. EF-G/EF-2 subfamily.</text>
</comment>
<name>EFG_CHLCV</name>
<gene>
    <name evidence="1" type="primary">fusA</name>
    <name type="ordered locus">CCA_00192</name>
</gene>
<organism>
    <name type="scientific">Chlamydia caviae (strain ATCC VR-813 / DSM 19441 / 03DC25 / GPIC)</name>
    <name type="common">Chlamydophila caviae</name>
    <dbReference type="NCBI Taxonomy" id="227941"/>
    <lineage>
        <taxon>Bacteria</taxon>
        <taxon>Pseudomonadati</taxon>
        <taxon>Chlamydiota</taxon>
        <taxon>Chlamydiia</taxon>
        <taxon>Chlamydiales</taxon>
        <taxon>Chlamydiaceae</taxon>
        <taxon>Chlamydia/Chlamydophila group</taxon>
        <taxon>Chlamydia</taxon>
    </lineage>
</organism>
<sequence>MSDQEFDLSKIRNIGIMAHIDAGKTTTTERILYYAGRTHKIGEVHEGGATMDWMEQEQERGITITSAATTVFWLDCKINIIDTPGHVDFTIEVERSLRVLDGAVAVFDAVSGVEPQSETVWRQANKYGVPRIAFVNKMDRMGANYFAAVESMKEKLGANAIPVHCPIGAESQFVGMVDLISQKALYFLDETLGAKWEEREIPEDLKEKCAELRYALLEELATVDEGNEAFMMKVLEDPDSITEEEIHQVMRKGVIENKINPVLCGTAFKNKGVQQLLNVIVKWLPSPKDRGIIHGINLKNNEEVHLEPRKDGPLAALAFKIMTDPYVGRITFIRIYSGTLKKGSAILNSTKDKKERISRLLEMHANERTDRDEFTVGDIGACVGLKYSVTGDTLCDDNQEIVLERIEIPEPVIDMAIEPKSKGDREKLAQALNALSEEDPTFRVTSNEETGQTIISGMGELHLDILRDRMIREFKVEANVGKPQVSYKETITKNGSSETKYVKQSGGRGQYAHVCLEIEPNEPGKGNEVVSKIVGGVIPREYIPAVMKGVEEGLNTGVLAGYGLVDVKVSIVFGSYHEVDSSEMAFKICGSMAVKEACRKAAPVILEPIMKVAVTTPEDHLGDVIGDLNRRRGKILGQESSRSMAQVNAEVPLSEMFGYTTSLRSLTSGRATSTMEPAFFAKVPQKIQEEIVKK</sequence>